<feature type="chain" id="PRO_0000121306" description="Ras-like GTP-binding protein YPT1">
    <location>
        <begin position="1"/>
        <end position="201"/>
    </location>
</feature>
<feature type="short sequence motif" description="Effector region" evidence="3">
    <location>
        <begin position="37"/>
        <end position="45"/>
    </location>
</feature>
<feature type="binding site" evidence="2">
    <location>
        <begin position="15"/>
        <end position="23"/>
    </location>
    <ligand>
        <name>GTP</name>
        <dbReference type="ChEBI" id="CHEBI:37565"/>
    </ligand>
</feature>
<feature type="binding site" evidence="2">
    <location>
        <begin position="33"/>
        <end position="40"/>
    </location>
    <ligand>
        <name>GTP</name>
        <dbReference type="ChEBI" id="CHEBI:37565"/>
    </ligand>
</feature>
<feature type="binding site" evidence="2">
    <location>
        <begin position="63"/>
        <end position="67"/>
    </location>
    <ligand>
        <name>GTP</name>
        <dbReference type="ChEBI" id="CHEBI:37565"/>
    </ligand>
</feature>
<feature type="binding site" evidence="2">
    <location>
        <begin position="121"/>
        <end position="124"/>
    </location>
    <ligand>
        <name>GTP</name>
        <dbReference type="ChEBI" id="CHEBI:37565"/>
    </ligand>
</feature>
<feature type="binding site" evidence="2">
    <location>
        <begin position="151"/>
        <end position="153"/>
    </location>
    <ligand>
        <name>GTP</name>
        <dbReference type="ChEBI" id="CHEBI:37565"/>
    </ligand>
</feature>
<feature type="lipid moiety-binding region" description="S-geranylgeranyl cysteine" evidence="1">
    <location>
        <position position="200"/>
    </location>
</feature>
<feature type="lipid moiety-binding region" description="S-geranylgeranyl cysteine" evidence="1">
    <location>
        <position position="201"/>
    </location>
</feature>
<comment type="function">
    <text evidence="1">The small GTPases Rab are key regulators of intracellular membrane trafficking, from the formation of transport vesicles to their fusion with membranes. Rabs cycle between an inactive GDP-bound form and an active GTP-bound form that is able to recruit to membranes different set of downstream effectors directly responsible for vesicle formation, movement, tethering and fusion. YPT1 regulates the trafficking of secretory vesicles from the endoplasmic reticulum (ER) to the Golgi. Plays a role in the initial events of the autophagic vacuole development which take place at specialized regions of the endoplasmic reticulum. Also involved in the recycling of membrane proteins.</text>
</comment>
<comment type="activity regulation">
    <text evidence="3">Rab activation is generally mediated by a guanine exchange factor (GEF), while inactivation through hydrolysis of bound GTP is catalyzed by a GTPase activating protein (GAP).</text>
</comment>
<comment type="subcellular location">
    <subcellularLocation>
        <location evidence="1">Endoplasmic reticulum membrane</location>
        <topology evidence="1">Peripheral membrane protein</topology>
    </subcellularLocation>
    <subcellularLocation>
        <location evidence="1">Golgi apparatus membrane</location>
        <topology evidence="1">Peripheral membrane protein</topology>
    </subcellularLocation>
    <subcellularLocation>
        <location evidence="1">Cytoplasm</location>
    </subcellularLocation>
    <subcellularLocation>
        <location evidence="1">Preautophagosomal structure membrane</location>
        <topology evidence="3">Lipid-anchor</topology>
        <orientation evidence="3">Cytoplasmic side</orientation>
    </subcellularLocation>
</comment>
<comment type="similarity">
    <text evidence="3">Belongs to the small GTPase superfamily. Rab family.</text>
</comment>
<gene>
    <name type="primary">YPT1</name>
</gene>
<dbReference type="EMBL" id="U30474">
    <property type="protein sequence ID" value="AAB40355.1"/>
    <property type="molecule type" value="Genomic_DNA"/>
</dbReference>
<dbReference type="PIR" id="JC5337">
    <property type="entry name" value="JC5337"/>
</dbReference>
<dbReference type="SMR" id="Q01890"/>
<dbReference type="VEuPathDB" id="FungiDB:PITG_03392"/>
<dbReference type="OMA" id="PDYHYLF"/>
<dbReference type="GO" id="GO:0005789">
    <property type="term" value="C:endoplasmic reticulum membrane"/>
    <property type="evidence" value="ECO:0007669"/>
    <property type="project" value="UniProtKB-SubCell"/>
</dbReference>
<dbReference type="GO" id="GO:0000139">
    <property type="term" value="C:Golgi membrane"/>
    <property type="evidence" value="ECO:0007669"/>
    <property type="project" value="UniProtKB-SubCell"/>
</dbReference>
<dbReference type="GO" id="GO:0034045">
    <property type="term" value="C:phagophore assembly site membrane"/>
    <property type="evidence" value="ECO:0007669"/>
    <property type="project" value="UniProtKB-SubCell"/>
</dbReference>
<dbReference type="GO" id="GO:0005525">
    <property type="term" value="F:GTP binding"/>
    <property type="evidence" value="ECO:0007669"/>
    <property type="project" value="UniProtKB-KW"/>
</dbReference>
<dbReference type="GO" id="GO:0003924">
    <property type="term" value="F:GTPase activity"/>
    <property type="evidence" value="ECO:0007669"/>
    <property type="project" value="InterPro"/>
</dbReference>
<dbReference type="GO" id="GO:0006914">
    <property type="term" value="P:autophagy"/>
    <property type="evidence" value="ECO:0007669"/>
    <property type="project" value="UniProtKB-KW"/>
</dbReference>
<dbReference type="GO" id="GO:0015031">
    <property type="term" value="P:protein transport"/>
    <property type="evidence" value="ECO:0007669"/>
    <property type="project" value="UniProtKB-KW"/>
</dbReference>
<dbReference type="CDD" id="cd01869">
    <property type="entry name" value="Rab1_Ypt1"/>
    <property type="match status" value="1"/>
</dbReference>
<dbReference type="FunFam" id="3.40.50.300:FF:000069">
    <property type="entry name" value="Ras GTP-binding protein YPT1"/>
    <property type="match status" value="1"/>
</dbReference>
<dbReference type="Gene3D" id="3.40.50.300">
    <property type="entry name" value="P-loop containing nucleotide triphosphate hydrolases"/>
    <property type="match status" value="1"/>
</dbReference>
<dbReference type="InterPro" id="IPR027417">
    <property type="entry name" value="P-loop_NTPase"/>
</dbReference>
<dbReference type="InterPro" id="IPR050227">
    <property type="entry name" value="Rab"/>
</dbReference>
<dbReference type="InterPro" id="IPR005225">
    <property type="entry name" value="Small_GTP-bd"/>
</dbReference>
<dbReference type="InterPro" id="IPR001806">
    <property type="entry name" value="Small_GTPase"/>
</dbReference>
<dbReference type="NCBIfam" id="TIGR00231">
    <property type="entry name" value="small_GTP"/>
    <property type="match status" value="1"/>
</dbReference>
<dbReference type="PANTHER" id="PTHR47977">
    <property type="entry name" value="RAS-RELATED PROTEIN RAB"/>
    <property type="match status" value="1"/>
</dbReference>
<dbReference type="Pfam" id="PF00071">
    <property type="entry name" value="Ras"/>
    <property type="match status" value="1"/>
</dbReference>
<dbReference type="PRINTS" id="PR00449">
    <property type="entry name" value="RASTRNSFRMNG"/>
</dbReference>
<dbReference type="SMART" id="SM00177">
    <property type="entry name" value="ARF"/>
    <property type="match status" value="1"/>
</dbReference>
<dbReference type="SMART" id="SM00175">
    <property type="entry name" value="RAB"/>
    <property type="match status" value="1"/>
</dbReference>
<dbReference type="SMART" id="SM00176">
    <property type="entry name" value="RAN"/>
    <property type="match status" value="1"/>
</dbReference>
<dbReference type="SMART" id="SM00173">
    <property type="entry name" value="RAS"/>
    <property type="match status" value="1"/>
</dbReference>
<dbReference type="SMART" id="SM00174">
    <property type="entry name" value="RHO"/>
    <property type="match status" value="1"/>
</dbReference>
<dbReference type="SUPFAM" id="SSF52540">
    <property type="entry name" value="P-loop containing nucleoside triphosphate hydrolases"/>
    <property type="match status" value="1"/>
</dbReference>
<dbReference type="PROSITE" id="PS51419">
    <property type="entry name" value="RAB"/>
    <property type="match status" value="1"/>
</dbReference>
<name>YPT1_PHYIN</name>
<proteinExistence type="inferred from homology"/>
<reference key="1">
    <citation type="journal article" date="1996" name="Gene">
        <title>Characterization of a Phytophthora infestans gene involved in vesicle transport.</title>
        <authorList>
            <person name="Chen Y."/>
            <person name="Roxby R."/>
        </authorList>
    </citation>
    <scope>NUCLEOTIDE SEQUENCE [GENOMIC DNA]</scope>
    <source>
        <strain>ATCC 52009 / 135</strain>
    </source>
</reference>
<protein>
    <recommendedName>
        <fullName>Ras-like GTP-binding protein YPT1</fullName>
    </recommendedName>
</protein>
<sequence>MNPEYDYLFKLLLIGDSGVGKSCLLLRFADDTYTESYISTIGVDFKIRTIELDGKTIKLQIWDTAGQERFRTITSSYYRGAHGIIVVYDVTDQESFNNVKQWLHEIDRYACENVNKLLVGNKSDLTAKRVVSTDAAKEFAESLGIEFLETSAKNAANVEKAFMMMAAQIKKRMANAPVAPKAGVKLTPGQQVPSNGGSKCC</sequence>
<organism>
    <name type="scientific">Phytophthora infestans</name>
    <name type="common">Potato late blight agent</name>
    <name type="synonym">Botrytis infestans</name>
    <dbReference type="NCBI Taxonomy" id="4787"/>
    <lineage>
        <taxon>Eukaryota</taxon>
        <taxon>Sar</taxon>
        <taxon>Stramenopiles</taxon>
        <taxon>Oomycota</taxon>
        <taxon>Peronosporales</taxon>
        <taxon>Peronosporaceae</taxon>
        <taxon>Phytophthora</taxon>
    </lineage>
</organism>
<accession>Q01890</accession>
<keyword id="KW-0072">Autophagy</keyword>
<keyword id="KW-0963">Cytoplasm</keyword>
<keyword id="KW-0256">Endoplasmic reticulum</keyword>
<keyword id="KW-0333">Golgi apparatus</keyword>
<keyword id="KW-0342">GTP-binding</keyword>
<keyword id="KW-0449">Lipoprotein</keyword>
<keyword id="KW-0472">Membrane</keyword>
<keyword id="KW-0547">Nucleotide-binding</keyword>
<keyword id="KW-0636">Prenylation</keyword>
<keyword id="KW-0653">Protein transport</keyword>
<keyword id="KW-0813">Transport</keyword>
<evidence type="ECO:0000250" key="1">
    <source>
        <dbReference type="UniProtKB" id="P01123"/>
    </source>
</evidence>
<evidence type="ECO:0000250" key="2">
    <source>
        <dbReference type="UniProtKB" id="P62820"/>
    </source>
</evidence>
<evidence type="ECO:0000305" key="3"/>